<comment type="function">
    <text evidence="2">Catalyzes the NADPH-dependent reductive deacylation of (S)-3-hydroxy-3-methylglutaryl-CoA (HMG-CoA) to (R)-mevalonate. Cannot use NADH instead of NADPH. Functions in the mevalonate (MVA) pathway leading to isopentenyl diphosphate (IPP), a key precursor for the biosynthesis of isoprenoid compounds such as archaeal membrane lipids.</text>
</comment>
<comment type="catalytic activity">
    <reaction evidence="2">
        <text>(R)-mevalonate + 2 NADP(+) + CoA = (3S)-3-hydroxy-3-methylglutaryl-CoA + 2 NADPH + 2 H(+)</text>
        <dbReference type="Rhea" id="RHEA:15989"/>
        <dbReference type="ChEBI" id="CHEBI:15378"/>
        <dbReference type="ChEBI" id="CHEBI:36464"/>
        <dbReference type="ChEBI" id="CHEBI:43074"/>
        <dbReference type="ChEBI" id="CHEBI:57287"/>
        <dbReference type="ChEBI" id="CHEBI:57783"/>
        <dbReference type="ChEBI" id="CHEBI:58349"/>
        <dbReference type="EC" id="1.1.1.34"/>
    </reaction>
</comment>
<comment type="activity regulation">
    <text evidence="2">Is competitively inhibited by lovastatin (formerly called mevinolin). Lovastatin also blocks the growth of H.salinarum, and this effect is reversed by addition of mevalonate, indicating the critical role that the mevalonate pathway plays in isoprenoid biosynthesis by these archaea.</text>
</comment>
<comment type="biophysicochemical properties">
    <kinetics>
        <KM evidence="2">20 uM for (S)-HMG-CoA</KM>
        <text>KCl concentrations greater than 2 M are required for maximum reductase activity.</text>
    </kinetics>
</comment>
<comment type="pathway">
    <text evidence="2">Metabolic intermediate biosynthesis; (R)-mevalonate biosynthesis; (R)-mevalonate from acetyl-CoA: step 3/3.</text>
</comment>
<comment type="subunit">
    <text evidence="2">Homodimer.</text>
</comment>
<comment type="subcellular location">
    <subcellularLocation>
        <location evidence="2">Cytoplasm</location>
    </subcellularLocation>
</comment>
<comment type="similarity">
    <text evidence="3">Belongs to the HMG-CoA reductase family.</text>
</comment>
<proteinExistence type="evidence at protein level"/>
<sequence>MPDDASDLADRVQAGDLRLYELDDETDADTAAAARRAVLERETDADTDALGAFAFDADQAADTAVENLTGGAQLPLGVAGPVALSGGAADGEYYLPMATTEGALVASVNRGCSAITAAGGANARVTKTGMTRAPVFRVADVTEGAEVAQWADDNTDALAAAAESTTSHGELTDVTPYVVGDNVYLRFRYDTKDAMGMNMATIATEAASELVEDETPAELVAVSGNLCTDKKPAAINAVEGRGRTVTADVTIPQDVVEERFDTTPAAIEEANTRKNLIGSAKAGSLGFNAHAANVVAAVFLATGQDAAQVVEGANAITTVEARDDALYASVNLASLEVGTVGGGTTLPTQREALDVLGVRGGGDPAGANADALAEIIAVGALAGEINLLAALASRRLSAAHADLGR</sequence>
<keyword id="KW-0963">Cytoplasm</keyword>
<keyword id="KW-0414">Isoprene biosynthesis</keyword>
<keyword id="KW-0444">Lipid biosynthesis</keyword>
<keyword id="KW-0443">Lipid metabolism</keyword>
<keyword id="KW-0521">NADP</keyword>
<keyword id="KW-0560">Oxidoreductase</keyword>
<reference key="1">
    <citation type="journal article" date="2008" name="Genomics">
        <title>Evolution in the laboratory: the genome of Halobacterium salinarum strain R1 compared to that of strain NRC-1.</title>
        <authorList>
            <person name="Pfeiffer F."/>
            <person name="Schuster S.C."/>
            <person name="Broicher A."/>
            <person name="Falb M."/>
            <person name="Palm P."/>
            <person name="Rodewald K."/>
            <person name="Ruepp A."/>
            <person name="Soppa J."/>
            <person name="Tittor J."/>
            <person name="Oesterhelt D."/>
        </authorList>
    </citation>
    <scope>NUCLEOTIDE SEQUENCE [LARGE SCALE GENOMIC DNA]</scope>
    <source>
        <strain>ATCC 29341 / DSM 671 / R1</strain>
    </source>
</reference>
<reference key="2">
    <citation type="journal article" date="1986" name="J. Biol. Chem.">
        <title>Isoprenoid synthesis in Halobacterium halobium. Modulation of 3-hydroxy-3-methylglutaryl coenzyme a concentration in response to mevalonate availability.</title>
        <authorList>
            <person name="Cabrera J.A."/>
            <person name="Bolds J."/>
            <person name="Shields P.E."/>
            <person name="Havel C.M."/>
            <person name="Watson J.A."/>
        </authorList>
    </citation>
    <scope>FUNCTION</scope>
    <scope>CATALYTIC ACTIVITY</scope>
    <scope>KINETIC PARAMETERS</scope>
    <scope>ACTIVITY REGULATION</scope>
    <scope>SUBCELLULAR LOCATION</scope>
    <scope>PATHWAY</scope>
    <scope>SUBUNIT</scope>
    <source>
        <strain>ATCC 29341 / DSM 671 / R1</strain>
    </source>
</reference>
<dbReference type="EC" id="1.1.1.34"/>
<dbReference type="EMBL" id="AM774415">
    <property type="protein sequence ID" value="CAP14368.1"/>
    <property type="molecule type" value="Genomic_DNA"/>
</dbReference>
<dbReference type="RefSeq" id="WP_010903374.1">
    <property type="nucleotide sequence ID" value="NC_010364.1"/>
</dbReference>
<dbReference type="SMR" id="B0R6J9"/>
<dbReference type="EnsemblBacteria" id="CAP14368">
    <property type="protein sequence ID" value="CAP14368"/>
    <property type="gene ID" value="OE_3637R"/>
</dbReference>
<dbReference type="GeneID" id="89350085"/>
<dbReference type="KEGG" id="hsl:OE_3637R"/>
<dbReference type="HOGENOM" id="CLU_001734_2_2_2"/>
<dbReference type="PhylomeDB" id="B0R6J9"/>
<dbReference type="UniPathway" id="UPA00058">
    <property type="reaction ID" value="UER00103"/>
</dbReference>
<dbReference type="Proteomes" id="UP000001321">
    <property type="component" value="Chromosome"/>
</dbReference>
<dbReference type="GO" id="GO:0005737">
    <property type="term" value="C:cytoplasm"/>
    <property type="evidence" value="ECO:0007669"/>
    <property type="project" value="UniProtKB-SubCell"/>
</dbReference>
<dbReference type="GO" id="GO:0004420">
    <property type="term" value="F:hydroxymethylglutaryl-CoA reductase (NADPH) activity"/>
    <property type="evidence" value="ECO:0007669"/>
    <property type="project" value="UniProtKB-EC"/>
</dbReference>
<dbReference type="GO" id="GO:0015936">
    <property type="term" value="P:coenzyme A metabolic process"/>
    <property type="evidence" value="ECO:0007669"/>
    <property type="project" value="InterPro"/>
</dbReference>
<dbReference type="GO" id="GO:0008299">
    <property type="term" value="P:isoprenoid biosynthetic process"/>
    <property type="evidence" value="ECO:0007669"/>
    <property type="project" value="UniProtKB-KW"/>
</dbReference>
<dbReference type="GO" id="GO:0016126">
    <property type="term" value="P:sterol biosynthetic process"/>
    <property type="evidence" value="ECO:0007669"/>
    <property type="project" value="TreeGrafter"/>
</dbReference>
<dbReference type="CDD" id="cd00643">
    <property type="entry name" value="HMG-CoA_reductase_classI"/>
    <property type="match status" value="1"/>
</dbReference>
<dbReference type="FunFam" id="3.30.70.420:FF:000001">
    <property type="entry name" value="3-hydroxy-3-methylglutaryl coenzyme A reductase"/>
    <property type="match status" value="1"/>
</dbReference>
<dbReference type="Gene3D" id="3.90.770.10">
    <property type="entry name" value="3-hydroxy-3-methylglutaryl-coenzyme A Reductase, Chain A, domain 2"/>
    <property type="match status" value="1"/>
</dbReference>
<dbReference type="Gene3D" id="3.30.70.420">
    <property type="entry name" value="Hydroxymethylglutaryl-CoA reductase, class I/II, NAD/NADP-binding domain"/>
    <property type="match status" value="1"/>
</dbReference>
<dbReference type="InterPro" id="IPR002202">
    <property type="entry name" value="HMG_CoA_Rdtase"/>
</dbReference>
<dbReference type="InterPro" id="IPR023074">
    <property type="entry name" value="HMG_CoA_Rdtase_cat_sf"/>
</dbReference>
<dbReference type="InterPro" id="IPR023076">
    <property type="entry name" value="HMG_CoA_Rdtase_CS"/>
</dbReference>
<dbReference type="InterPro" id="IPR004554">
    <property type="entry name" value="HMG_CoA_Rdtase_eu_arc"/>
</dbReference>
<dbReference type="InterPro" id="IPR009023">
    <property type="entry name" value="HMG_CoA_Rdtase_NAD(P)-bd_sf"/>
</dbReference>
<dbReference type="InterPro" id="IPR009029">
    <property type="entry name" value="HMG_CoA_Rdtase_sub-bd_dom_sf"/>
</dbReference>
<dbReference type="NCBIfam" id="TIGR00533">
    <property type="entry name" value="HMG_CoA_R_NADP"/>
    <property type="match status" value="1"/>
</dbReference>
<dbReference type="PANTHER" id="PTHR10572">
    <property type="entry name" value="3-HYDROXY-3-METHYLGLUTARYL-COENZYME A REDUCTASE"/>
    <property type="match status" value="1"/>
</dbReference>
<dbReference type="PANTHER" id="PTHR10572:SF24">
    <property type="entry name" value="3-HYDROXY-3-METHYLGLUTARYL-COENZYME A REDUCTASE"/>
    <property type="match status" value="1"/>
</dbReference>
<dbReference type="Pfam" id="PF00368">
    <property type="entry name" value="HMG-CoA_red"/>
    <property type="match status" value="1"/>
</dbReference>
<dbReference type="PRINTS" id="PR00071">
    <property type="entry name" value="HMGCOARDTASE"/>
</dbReference>
<dbReference type="SUPFAM" id="SSF55035">
    <property type="entry name" value="NAD-binding domain of HMG-CoA reductase"/>
    <property type="match status" value="1"/>
</dbReference>
<dbReference type="SUPFAM" id="SSF56542">
    <property type="entry name" value="Substrate-binding domain of HMG-CoA reductase"/>
    <property type="match status" value="1"/>
</dbReference>
<dbReference type="PROSITE" id="PS00066">
    <property type="entry name" value="HMG_COA_REDUCTASE_1"/>
    <property type="match status" value="1"/>
</dbReference>
<dbReference type="PROSITE" id="PS00318">
    <property type="entry name" value="HMG_COA_REDUCTASE_2"/>
    <property type="match status" value="1"/>
</dbReference>
<dbReference type="PROSITE" id="PS50065">
    <property type="entry name" value="HMG_COA_REDUCTASE_4"/>
    <property type="match status" value="1"/>
</dbReference>
<protein>
    <recommendedName>
        <fullName>3-hydroxy-3-methylglutaryl-coenzyme A reductase</fullName>
        <shortName>HMG-CoA reductase</shortName>
        <shortName>HMGR</shortName>
        <ecNumber>1.1.1.34</ecNumber>
    </recommendedName>
</protein>
<name>HMDH_HALS3</name>
<gene>
    <name type="primary">hmgA</name>
    <name type="ordered locus">OE_3637R</name>
</gene>
<evidence type="ECO:0000250" key="1"/>
<evidence type="ECO:0000269" key="2">
    <source>
    </source>
</evidence>
<evidence type="ECO:0000305" key="3"/>
<accession>B0R6J9</accession>
<organism>
    <name type="scientific">Halobacterium salinarum (strain ATCC 29341 / DSM 671 / R1)</name>
    <dbReference type="NCBI Taxonomy" id="478009"/>
    <lineage>
        <taxon>Archaea</taxon>
        <taxon>Methanobacteriati</taxon>
        <taxon>Methanobacteriota</taxon>
        <taxon>Stenosarchaea group</taxon>
        <taxon>Halobacteria</taxon>
        <taxon>Halobacteriales</taxon>
        <taxon>Halobacteriaceae</taxon>
        <taxon>Halobacterium</taxon>
        <taxon>Halobacterium salinarum NRC-34001</taxon>
    </lineage>
</organism>
<feature type="chain" id="PRO_0000429252" description="3-hydroxy-3-methylglutaryl-coenzyme A reductase">
    <location>
        <begin position="1"/>
        <end position="405"/>
    </location>
</feature>
<feature type="active site" description="Charge relay system" evidence="1">
    <location>
        <position position="101"/>
    </location>
</feature>
<feature type="active site" description="Charge relay system" evidence="1">
    <location>
        <position position="305"/>
    </location>
</feature>
<feature type="active site" description="Proton donor" evidence="1">
    <location>
        <position position="400"/>
    </location>
</feature>